<accession>Q3K3W0</accession>
<reference key="1">
    <citation type="journal article" date="2005" name="Proc. Natl. Acad. Sci. U.S.A.">
        <title>Genome analysis of multiple pathogenic isolates of Streptococcus agalactiae: implications for the microbial 'pan-genome'.</title>
        <authorList>
            <person name="Tettelin H."/>
            <person name="Masignani V."/>
            <person name="Cieslewicz M.J."/>
            <person name="Donati C."/>
            <person name="Medini D."/>
            <person name="Ward N.L."/>
            <person name="Angiuoli S.V."/>
            <person name="Crabtree J."/>
            <person name="Jones A.L."/>
            <person name="Durkin A.S."/>
            <person name="DeBoy R.T."/>
            <person name="Davidsen T.M."/>
            <person name="Mora M."/>
            <person name="Scarselli M."/>
            <person name="Margarit y Ros I."/>
            <person name="Peterson J.D."/>
            <person name="Hauser C.R."/>
            <person name="Sundaram J.P."/>
            <person name="Nelson W.C."/>
            <person name="Madupu R."/>
            <person name="Brinkac L.M."/>
            <person name="Dodson R.J."/>
            <person name="Rosovitz M.J."/>
            <person name="Sullivan S.A."/>
            <person name="Daugherty S.C."/>
            <person name="Haft D.H."/>
            <person name="Selengut J."/>
            <person name="Gwinn M.L."/>
            <person name="Zhou L."/>
            <person name="Zafar N."/>
            <person name="Khouri H."/>
            <person name="Radune D."/>
            <person name="Dimitrov G."/>
            <person name="Watkins K."/>
            <person name="O'Connor K.J."/>
            <person name="Smith S."/>
            <person name="Utterback T.R."/>
            <person name="White O."/>
            <person name="Rubens C.E."/>
            <person name="Grandi G."/>
            <person name="Madoff L.C."/>
            <person name="Kasper D.L."/>
            <person name="Telford J.L."/>
            <person name="Wessels M.R."/>
            <person name="Rappuoli R."/>
            <person name="Fraser C.M."/>
        </authorList>
    </citation>
    <scope>NUCLEOTIDE SEQUENCE [LARGE SCALE GENOMIC DNA]</scope>
    <source>
        <strain>ATCC 27591 / A909 / CDC SS700</strain>
    </source>
</reference>
<protein>
    <recommendedName>
        <fullName evidence="1">Small ribosomal subunit protein uS17</fullName>
    </recommendedName>
    <alternativeName>
        <fullName evidence="2">30S ribosomal protein S17</fullName>
    </alternativeName>
</protein>
<sequence>MERNQRKTLYGRVVSDKMDKTITVVVETKRNHPVYGKRINYSKKYKAHDENNVAKEGDIVRIMETRPLSATKRFRLVEVVEKAVII</sequence>
<comment type="function">
    <text evidence="1">One of the primary rRNA binding proteins, it binds specifically to the 5'-end of 16S ribosomal RNA.</text>
</comment>
<comment type="subunit">
    <text evidence="1">Part of the 30S ribosomal subunit.</text>
</comment>
<comment type="similarity">
    <text evidence="1">Belongs to the universal ribosomal protein uS17 family.</text>
</comment>
<dbReference type="EMBL" id="CP000114">
    <property type="protein sequence ID" value="ABA46031.1"/>
    <property type="molecule type" value="Genomic_DNA"/>
</dbReference>
<dbReference type="RefSeq" id="WP_000440811.1">
    <property type="nucleotide sequence ID" value="NC_007432.1"/>
</dbReference>
<dbReference type="SMR" id="Q3K3W0"/>
<dbReference type="GeneID" id="69900035"/>
<dbReference type="KEGG" id="sak:SAK_0100"/>
<dbReference type="HOGENOM" id="CLU_073626_1_0_9"/>
<dbReference type="GO" id="GO:0022627">
    <property type="term" value="C:cytosolic small ribosomal subunit"/>
    <property type="evidence" value="ECO:0007669"/>
    <property type="project" value="TreeGrafter"/>
</dbReference>
<dbReference type="GO" id="GO:0019843">
    <property type="term" value="F:rRNA binding"/>
    <property type="evidence" value="ECO:0007669"/>
    <property type="project" value="UniProtKB-UniRule"/>
</dbReference>
<dbReference type="GO" id="GO:0003735">
    <property type="term" value="F:structural constituent of ribosome"/>
    <property type="evidence" value="ECO:0007669"/>
    <property type="project" value="InterPro"/>
</dbReference>
<dbReference type="GO" id="GO:0006412">
    <property type="term" value="P:translation"/>
    <property type="evidence" value="ECO:0007669"/>
    <property type="project" value="UniProtKB-UniRule"/>
</dbReference>
<dbReference type="CDD" id="cd00364">
    <property type="entry name" value="Ribosomal_uS17"/>
    <property type="match status" value="1"/>
</dbReference>
<dbReference type="FunFam" id="2.40.50.140:FF:000026">
    <property type="entry name" value="30S ribosomal protein S17"/>
    <property type="match status" value="1"/>
</dbReference>
<dbReference type="Gene3D" id="2.40.50.140">
    <property type="entry name" value="Nucleic acid-binding proteins"/>
    <property type="match status" value="1"/>
</dbReference>
<dbReference type="HAMAP" id="MF_01345_B">
    <property type="entry name" value="Ribosomal_uS17_B"/>
    <property type="match status" value="1"/>
</dbReference>
<dbReference type="InterPro" id="IPR012340">
    <property type="entry name" value="NA-bd_OB-fold"/>
</dbReference>
<dbReference type="InterPro" id="IPR000266">
    <property type="entry name" value="Ribosomal_uS17"/>
</dbReference>
<dbReference type="InterPro" id="IPR019984">
    <property type="entry name" value="Ribosomal_uS17_bact/chlr"/>
</dbReference>
<dbReference type="InterPro" id="IPR019979">
    <property type="entry name" value="Ribosomal_uS17_CS"/>
</dbReference>
<dbReference type="NCBIfam" id="NF004123">
    <property type="entry name" value="PRK05610.1"/>
    <property type="match status" value="1"/>
</dbReference>
<dbReference type="NCBIfam" id="TIGR03635">
    <property type="entry name" value="uS17_bact"/>
    <property type="match status" value="1"/>
</dbReference>
<dbReference type="PANTHER" id="PTHR10744">
    <property type="entry name" value="40S RIBOSOMAL PROTEIN S11 FAMILY MEMBER"/>
    <property type="match status" value="1"/>
</dbReference>
<dbReference type="PANTHER" id="PTHR10744:SF1">
    <property type="entry name" value="SMALL RIBOSOMAL SUBUNIT PROTEIN US17M"/>
    <property type="match status" value="1"/>
</dbReference>
<dbReference type="Pfam" id="PF00366">
    <property type="entry name" value="Ribosomal_S17"/>
    <property type="match status" value="1"/>
</dbReference>
<dbReference type="PRINTS" id="PR00973">
    <property type="entry name" value="RIBOSOMALS17"/>
</dbReference>
<dbReference type="SUPFAM" id="SSF50249">
    <property type="entry name" value="Nucleic acid-binding proteins"/>
    <property type="match status" value="1"/>
</dbReference>
<dbReference type="PROSITE" id="PS00056">
    <property type="entry name" value="RIBOSOMAL_S17"/>
    <property type="match status" value="1"/>
</dbReference>
<proteinExistence type="inferred from homology"/>
<evidence type="ECO:0000255" key="1">
    <source>
        <dbReference type="HAMAP-Rule" id="MF_01345"/>
    </source>
</evidence>
<evidence type="ECO:0000305" key="2"/>
<feature type="chain" id="PRO_0000233572" description="Small ribosomal subunit protein uS17">
    <location>
        <begin position="1"/>
        <end position="86"/>
    </location>
</feature>
<name>RS17_STRA1</name>
<gene>
    <name evidence="1" type="primary">rpsQ</name>
    <name type="ordered locus">SAK_0100</name>
</gene>
<keyword id="KW-0687">Ribonucleoprotein</keyword>
<keyword id="KW-0689">Ribosomal protein</keyword>
<keyword id="KW-0694">RNA-binding</keyword>
<keyword id="KW-0699">rRNA-binding</keyword>
<organism>
    <name type="scientific">Streptococcus agalactiae serotype Ia (strain ATCC 27591 / A909 / CDC SS700)</name>
    <dbReference type="NCBI Taxonomy" id="205921"/>
    <lineage>
        <taxon>Bacteria</taxon>
        <taxon>Bacillati</taxon>
        <taxon>Bacillota</taxon>
        <taxon>Bacilli</taxon>
        <taxon>Lactobacillales</taxon>
        <taxon>Streptococcaceae</taxon>
        <taxon>Streptococcus</taxon>
    </lineage>
</organism>